<name>RPOB_NEOCA</name>
<geneLocation type="apicoplast"/>
<evidence type="ECO:0000250" key="1"/>
<evidence type="ECO:0000305" key="2"/>
<comment type="function">
    <text evidence="1">DNA-dependent RNA polymerase catalyzes the transcription of DNA into RNA using the four ribonucleoside triphosphates as substrates.</text>
</comment>
<comment type="catalytic activity">
    <reaction>
        <text>RNA(n) + a ribonucleoside 5'-triphosphate = RNA(n+1) + diphosphate</text>
        <dbReference type="Rhea" id="RHEA:21248"/>
        <dbReference type="Rhea" id="RHEA-COMP:14527"/>
        <dbReference type="Rhea" id="RHEA-COMP:17342"/>
        <dbReference type="ChEBI" id="CHEBI:33019"/>
        <dbReference type="ChEBI" id="CHEBI:61557"/>
        <dbReference type="ChEBI" id="CHEBI:140395"/>
        <dbReference type="EC" id="2.7.7.6"/>
    </reaction>
</comment>
<comment type="subunit">
    <text evidence="2">In plastids the minimal PEP RNA polymerase catalytic core is composed of four subunits: alpha, beta, beta', and beta''. When a (nuclear-encoded) sigma factor is associated with the core the holoenzyme is formed, which can initiate transcription (Potential).</text>
</comment>
<comment type="subcellular location">
    <subcellularLocation>
        <location>Plastid</location>
        <location>Apicoplast</location>
    </subcellularLocation>
</comment>
<comment type="similarity">
    <text evidence="2">Belongs to the RNA polymerase beta chain family.</text>
</comment>
<protein>
    <recommendedName>
        <fullName>DNA-directed RNA polymerase subunit beta</fullName>
        <ecNumber>2.7.7.6</ecNumber>
    </recommendedName>
    <alternativeName>
        <fullName>PEP</fullName>
    </alternativeName>
    <alternativeName>
        <fullName>Plastid-encoded RNA polymerase subunit beta</fullName>
        <shortName>RNA polymerase subunit beta</shortName>
    </alternativeName>
</protein>
<gene>
    <name type="primary">rpoB</name>
</gene>
<dbReference type="EC" id="2.7.7.6"/>
<dbReference type="EMBL" id="AF138960">
    <property type="protein sequence ID" value="AAF14261.1"/>
    <property type="molecule type" value="Genomic_DNA"/>
</dbReference>
<dbReference type="SMR" id="Q9NJN5"/>
<dbReference type="VEuPathDB" id="ToxoDB:NCLIV_028180"/>
<dbReference type="VEuPathDB" id="ToxoDB:NCLIV_034580"/>
<dbReference type="GO" id="GO:0020011">
    <property type="term" value="C:apicoplast"/>
    <property type="evidence" value="ECO:0007669"/>
    <property type="project" value="UniProtKB-SubCell"/>
</dbReference>
<dbReference type="GO" id="GO:0000428">
    <property type="term" value="C:DNA-directed RNA polymerase complex"/>
    <property type="evidence" value="ECO:0007669"/>
    <property type="project" value="UniProtKB-KW"/>
</dbReference>
<dbReference type="GO" id="GO:0005739">
    <property type="term" value="C:mitochondrion"/>
    <property type="evidence" value="ECO:0007669"/>
    <property type="project" value="GOC"/>
</dbReference>
<dbReference type="GO" id="GO:0003677">
    <property type="term" value="F:DNA binding"/>
    <property type="evidence" value="ECO:0007669"/>
    <property type="project" value="InterPro"/>
</dbReference>
<dbReference type="GO" id="GO:0003899">
    <property type="term" value="F:DNA-directed RNA polymerase activity"/>
    <property type="evidence" value="ECO:0007669"/>
    <property type="project" value="UniProtKB-EC"/>
</dbReference>
<dbReference type="GO" id="GO:0032549">
    <property type="term" value="F:ribonucleoside binding"/>
    <property type="evidence" value="ECO:0007669"/>
    <property type="project" value="InterPro"/>
</dbReference>
<dbReference type="GO" id="GO:0006351">
    <property type="term" value="P:DNA-templated transcription"/>
    <property type="evidence" value="ECO:0007669"/>
    <property type="project" value="InterPro"/>
</dbReference>
<dbReference type="CDD" id="cd00653">
    <property type="entry name" value="RNA_pol_B_RPB2"/>
    <property type="match status" value="1"/>
</dbReference>
<dbReference type="Gene3D" id="2.40.50.100">
    <property type="match status" value="1"/>
</dbReference>
<dbReference type="Gene3D" id="2.40.50.150">
    <property type="match status" value="1"/>
</dbReference>
<dbReference type="Gene3D" id="3.90.1100.10">
    <property type="match status" value="1"/>
</dbReference>
<dbReference type="Gene3D" id="2.30.150.10">
    <property type="entry name" value="DNA-directed RNA polymerase, beta subunit, external 1 domain"/>
    <property type="match status" value="1"/>
</dbReference>
<dbReference type="Gene3D" id="2.40.270.10">
    <property type="entry name" value="DNA-directed RNA polymerase, subunit 2, domain 6"/>
    <property type="match status" value="2"/>
</dbReference>
<dbReference type="Gene3D" id="3.90.1800.10">
    <property type="entry name" value="RNA polymerase alpha subunit dimerisation domain"/>
    <property type="match status" value="1"/>
</dbReference>
<dbReference type="Gene3D" id="3.90.1110.10">
    <property type="entry name" value="RNA polymerase Rpb2, domain 2"/>
    <property type="match status" value="1"/>
</dbReference>
<dbReference type="InterPro" id="IPR042107">
    <property type="entry name" value="DNA-dir_RNA_pol_bsu_ext_1_sf"/>
</dbReference>
<dbReference type="InterPro" id="IPR015712">
    <property type="entry name" value="DNA-dir_RNA_pol_su2"/>
</dbReference>
<dbReference type="InterPro" id="IPR007120">
    <property type="entry name" value="DNA-dir_RNAP_su2_dom"/>
</dbReference>
<dbReference type="InterPro" id="IPR037033">
    <property type="entry name" value="DNA-dir_RNAP_su2_hyb_sf"/>
</dbReference>
<dbReference type="InterPro" id="IPR037034">
    <property type="entry name" value="RNA_pol_Rpb2_2_sf"/>
</dbReference>
<dbReference type="InterPro" id="IPR007645">
    <property type="entry name" value="RNA_pol_Rpb2_3"/>
</dbReference>
<dbReference type="InterPro" id="IPR007641">
    <property type="entry name" value="RNA_pol_Rpb2_7"/>
</dbReference>
<dbReference type="InterPro" id="IPR014724">
    <property type="entry name" value="RNA_pol_RPB2_OB-fold"/>
</dbReference>
<dbReference type="PANTHER" id="PTHR20856">
    <property type="entry name" value="DNA-DIRECTED RNA POLYMERASE I SUBUNIT 2"/>
    <property type="match status" value="1"/>
</dbReference>
<dbReference type="Pfam" id="PF04565">
    <property type="entry name" value="RNA_pol_Rpb2_3"/>
    <property type="match status" value="1"/>
</dbReference>
<dbReference type="Pfam" id="PF00562">
    <property type="entry name" value="RNA_pol_Rpb2_6"/>
    <property type="match status" value="1"/>
</dbReference>
<dbReference type="Pfam" id="PF04560">
    <property type="entry name" value="RNA_pol_Rpb2_7"/>
    <property type="match status" value="1"/>
</dbReference>
<dbReference type="SUPFAM" id="SSF64484">
    <property type="entry name" value="beta and beta-prime subunits of DNA dependent RNA-polymerase"/>
    <property type="match status" value="1"/>
</dbReference>
<feature type="chain" id="PRO_0000300455" description="DNA-directed RNA polymerase subunit beta">
    <location>
        <begin position="1"/>
        <end position="1050"/>
    </location>
</feature>
<organism>
    <name type="scientific">Neospora caninum</name>
    <name type="common">Coccidian parasite</name>
    <dbReference type="NCBI Taxonomy" id="29176"/>
    <lineage>
        <taxon>Eukaryota</taxon>
        <taxon>Sar</taxon>
        <taxon>Alveolata</taxon>
        <taxon>Apicomplexa</taxon>
        <taxon>Conoidasida</taxon>
        <taxon>Coccidia</taxon>
        <taxon>Eucoccidiorida</taxon>
        <taxon>Eimeriorina</taxon>
        <taxon>Sarcocystidae</taxon>
        <taxon>Neospora</taxon>
    </lineage>
</organism>
<proteinExistence type="inferred from homology"/>
<sequence>MAFKIKTFLSIKSHKIFYTDFYFFLKKKLIILIKNIFPEYFNFNNKYKNWNLICLPDFLYFKVNNTHFLDNVQYINSLIKIFLPLKFQNLKTNQIFFKNLLIFELPKYNSHNYCYLNGLKKIFISKYFTSNGIFFHKYLKRKYDIYYAKILLTNSNFFNIVLDLKLKQIYLSIKNLKFNFILFLYYLGINNKDILKYSRYKKSKILKLLIFTALQTNLINNKKFILKNLNYLKSIFKVTNLNKNYKHFIINKNKLNYNYGNFNKNNFLTIDFIFILDLLLDLQSKKLCFKNIDHLDNKHINTIGNYFQHNFKFYLKKFISIIPNLIKLKKFSLLKVYNFKELLILNPLIQYLEQINSFSELTHKYKLNNYNSSLKGILNLREICLNQIGKLCLIDTTEGINCGLIVNFAKHIRIYKKGIIQIYVSPVFKNKTKEFINFKTSLDQELYLIQFNNINLRKNKLFNENIKVVYNKNNFRIKFISNKKSFLLKFADLFSFTENLIPFIKYNDPARCLMGAKMQSQSVPLLNKKKSFVVTGYEKEIITKSDITIKALQEGIVLNASSLKIHIKDLFNREIVYYLSKYKKSNQNTLIHQKPLVWNGERVFTNQLLTQHQDIIDSEFAIGNNLLIYYGNFCGYDFEDAVIGSKRVLYQQLFSSLHMDIYEFNFGYNNENDIEFSTLEIPKQSYYIKKSLDSLGIVKEGEKILTGNILLTKIKVTKPNYTYKSIFKLIYSIFGKTIRNIKDNSLYIQTGKNGRVSKIELFLINTNSHYKTYNNSYLKCRIFICKQRFLTVGDKLCGRYGNKGILSYIAENADLPFLQNSFYPDIIVGALGIPSRMNLGQLFEALVGKIGFSYNIRILPSFTSSSNAYFNYLKILIYNFLMFNNLKKGFNWLYNFNLPGKFLIRDGRTGIKLKSSVLCGVSRYSKLIHMIKDKLHFRTTGPYTEILQQPLKGKKNLGGQRFGEMEIWALEAFGASYNLKEILNYKSDDCFARNNLKDYLLFRNSELQNSTITESFRVILKEFNGLILNLELFLITDDLEENYLNLTINY</sequence>
<keyword id="KW-0933">Apicoplast</keyword>
<keyword id="KW-0240">DNA-directed RNA polymerase</keyword>
<keyword id="KW-0548">Nucleotidyltransferase</keyword>
<keyword id="KW-0934">Plastid</keyword>
<keyword id="KW-0804">Transcription</keyword>
<keyword id="KW-0808">Transferase</keyword>
<accession>Q9NJN5</accession>
<reference key="1">
    <citation type="journal article" date="1999" name="Int. J. Parasitol.">
        <title>Sequence evidence for an altered genetic code in the Neospora caninum plastid.</title>
        <authorList>
            <person name="Lang-Unnasch N."/>
            <person name="Aiello D.P."/>
        </authorList>
    </citation>
    <scope>NUCLEOTIDE SEQUENCE [GENOMIC DNA]</scope>
    <scope>SUGGESTION OF ALTERED GENETIC CODE</scope>
    <source>
        <strain>Nc1</strain>
    </source>
</reference>